<proteinExistence type="inferred from homology"/>
<comment type="function">
    <text evidence="1">DNA polymerase involved in damage-induced mutagenesis and translesion synthesis (TLS). It is not the major replicative DNA polymerase.</text>
</comment>
<comment type="catalytic activity">
    <reaction evidence="1">
        <text>DNA(n) + a 2'-deoxyribonucleoside 5'-triphosphate = DNA(n+1) + diphosphate</text>
        <dbReference type="Rhea" id="RHEA:22508"/>
        <dbReference type="Rhea" id="RHEA-COMP:17339"/>
        <dbReference type="Rhea" id="RHEA-COMP:17340"/>
        <dbReference type="ChEBI" id="CHEBI:33019"/>
        <dbReference type="ChEBI" id="CHEBI:61560"/>
        <dbReference type="ChEBI" id="CHEBI:173112"/>
        <dbReference type="EC" id="2.7.7.7"/>
    </reaction>
</comment>
<comment type="subcellular location">
    <subcellularLocation>
        <location evidence="1">Cytoplasm</location>
    </subcellularLocation>
</comment>
<comment type="similarity">
    <text evidence="1">Belongs to the DNA polymerase type-C family. DnaE2 subfamily.</text>
</comment>
<keyword id="KW-0963">Cytoplasm</keyword>
<keyword id="KW-0227">DNA damage</keyword>
<keyword id="KW-0234">DNA repair</keyword>
<keyword id="KW-0235">DNA replication</keyword>
<keyword id="KW-0239">DNA-directed DNA polymerase</keyword>
<keyword id="KW-0548">Nucleotidyltransferase</keyword>
<keyword id="KW-1185">Reference proteome</keyword>
<keyword id="KW-0808">Transferase</keyword>
<sequence length="1039" mass="117525">MAGSADISKGCSGQLFAELHSLSHYSFLRSAASPEELVRRADDLGYAAIAITDECSVAGIVKAYQESKARDIKLVVGSEFRVPEVGTLVVLAPTREAYAELCKKITLFRSRSEKGHYQANIDDFFDGFSQCLLLWQPDFSQAQLLAIGEKLKSVWQQRFWLLYERHYQADDERAFQAMVELQQAVKVKVTCAGGVCMATIEQQPLYDILNAIQHGGSLAHQPGLASNNAEHHLRSLSELQQCYPQKWLAETLVIAQQCQFCLSELRYEYPAELVPEGMSASGYLKQLTEQGARWRYPQGVPESIKALYLKELSLIKEQSYEPFFLTIHDLVRFAREQGILFQGRGSAANSVVCYCLGITAVNPAQIQVLFERFISKERNEPPDIDVDFEHERREEVIQYIYRKYGRQRAALAATVITYRFKSAFRDVGKALGFSEQQLQYFRRNLDRRDKEQSWQQQLVQQHPEVTNSVRGQHLLQFTEQLMGTPRHLSQHVGGFVIAADDLSRLVPVENASMTDRTVIQWDKTDLESLGLLKVDVLALGMLTALRKMLALINLRYDQQLTMATIPQEDSRVYQQLQTADSMGIFQIESRAQMNMLPRLKPKTFYDLVIQIAIVRPGPIQGDMVHPFLRRRAGLEEVDYPSDEVKSVLERTLGVPIFQEQVIKLAMVAAGFSGGEADQLRRAMASWGQNGHLTRFEDKLINGMLERGYKQEFAERLFRQICGFGQYGFPESHSASFANLAYVSSWFKTYHPAAFYVGLLNSLPMGFYSASQLVQDAQRHGVAFLAADINASDWNYCWLPKEDTNSDETVRMGLRQIQGLSESRIKHTLMQRPEDGFTSMHELRKSGLRDSDINALARADALKSIAGHRHQAHWQSLSMSDQQMPLFENVKDRPARQLPAPDEPDNIKADYESTGLTLGRHPLALLRNNPELKNCVLASDLMTCRSGQVLTLAGLVTCRQRPGTRSGVTFLTLEDESGNSNVVVWANTARQFRQCFLTSNLLWVKGIVEIHDGVVHVIAGRLKDLSGLLSFTRLESRRFH</sequence>
<name>DNAE2_IDILO</name>
<feature type="chain" id="PRO_0000103381" description="Error-prone DNA polymerase">
    <location>
        <begin position="1"/>
        <end position="1039"/>
    </location>
</feature>
<accession>Q5QUT9</accession>
<gene>
    <name evidence="1" type="primary">dnaE2</name>
    <name type="ordered locus">IL2566</name>
</gene>
<evidence type="ECO:0000255" key="1">
    <source>
        <dbReference type="HAMAP-Rule" id="MF_01902"/>
    </source>
</evidence>
<protein>
    <recommendedName>
        <fullName evidence="1">Error-prone DNA polymerase</fullName>
        <ecNumber evidence="1">2.7.7.7</ecNumber>
    </recommendedName>
</protein>
<organism>
    <name type="scientific">Idiomarina loihiensis (strain ATCC BAA-735 / DSM 15497 / L2-TR)</name>
    <dbReference type="NCBI Taxonomy" id="283942"/>
    <lineage>
        <taxon>Bacteria</taxon>
        <taxon>Pseudomonadati</taxon>
        <taxon>Pseudomonadota</taxon>
        <taxon>Gammaproteobacteria</taxon>
        <taxon>Alteromonadales</taxon>
        <taxon>Idiomarinaceae</taxon>
        <taxon>Idiomarina</taxon>
    </lineage>
</organism>
<reference key="1">
    <citation type="journal article" date="2004" name="Proc. Natl. Acad. Sci. U.S.A.">
        <title>Genome sequence of the deep-sea gamma-proteobacterium Idiomarina loihiensis reveals amino acid fermentation as a source of carbon and energy.</title>
        <authorList>
            <person name="Hou S."/>
            <person name="Saw J.H."/>
            <person name="Lee K.S."/>
            <person name="Freitas T.A."/>
            <person name="Belisle C."/>
            <person name="Kawarabayasi Y."/>
            <person name="Donachie S.P."/>
            <person name="Pikina A."/>
            <person name="Galperin M.Y."/>
            <person name="Koonin E.V."/>
            <person name="Makarova K.S."/>
            <person name="Omelchenko M.V."/>
            <person name="Sorokin A."/>
            <person name="Wolf Y.I."/>
            <person name="Li Q.X."/>
            <person name="Keum Y.S."/>
            <person name="Campbell S."/>
            <person name="Denery J."/>
            <person name="Aizawa S."/>
            <person name="Shibata S."/>
            <person name="Malahoff A."/>
            <person name="Alam M."/>
        </authorList>
    </citation>
    <scope>NUCLEOTIDE SEQUENCE [LARGE SCALE GENOMIC DNA]</scope>
    <source>
        <strain>ATCC BAA-735 / DSM 15497 / L2-TR</strain>
    </source>
</reference>
<dbReference type="EC" id="2.7.7.7" evidence="1"/>
<dbReference type="EMBL" id="AE017340">
    <property type="protein sequence ID" value="AAV83398.1"/>
    <property type="molecule type" value="Genomic_DNA"/>
</dbReference>
<dbReference type="RefSeq" id="WP_011235789.1">
    <property type="nucleotide sequence ID" value="NC_006512.1"/>
</dbReference>
<dbReference type="SMR" id="Q5QUT9"/>
<dbReference type="STRING" id="283942.IL2566"/>
<dbReference type="GeneID" id="41337764"/>
<dbReference type="KEGG" id="ilo:IL2566"/>
<dbReference type="eggNOG" id="COG0587">
    <property type="taxonomic scope" value="Bacteria"/>
</dbReference>
<dbReference type="HOGENOM" id="CLU_001600_4_0_6"/>
<dbReference type="OrthoDB" id="9803237at2"/>
<dbReference type="Proteomes" id="UP000001171">
    <property type="component" value="Chromosome"/>
</dbReference>
<dbReference type="GO" id="GO:0005737">
    <property type="term" value="C:cytoplasm"/>
    <property type="evidence" value="ECO:0007669"/>
    <property type="project" value="UniProtKB-SubCell"/>
</dbReference>
<dbReference type="GO" id="GO:0008408">
    <property type="term" value="F:3'-5' exonuclease activity"/>
    <property type="evidence" value="ECO:0007669"/>
    <property type="project" value="InterPro"/>
</dbReference>
<dbReference type="GO" id="GO:0003887">
    <property type="term" value="F:DNA-directed DNA polymerase activity"/>
    <property type="evidence" value="ECO:0007669"/>
    <property type="project" value="UniProtKB-UniRule"/>
</dbReference>
<dbReference type="GO" id="GO:0003676">
    <property type="term" value="F:nucleic acid binding"/>
    <property type="evidence" value="ECO:0007669"/>
    <property type="project" value="InterPro"/>
</dbReference>
<dbReference type="GO" id="GO:0006281">
    <property type="term" value="P:DNA repair"/>
    <property type="evidence" value="ECO:0007669"/>
    <property type="project" value="UniProtKB-UniRule"/>
</dbReference>
<dbReference type="GO" id="GO:0006260">
    <property type="term" value="P:DNA replication"/>
    <property type="evidence" value="ECO:0007669"/>
    <property type="project" value="UniProtKB-KW"/>
</dbReference>
<dbReference type="CDD" id="cd04485">
    <property type="entry name" value="DnaE_OBF"/>
    <property type="match status" value="1"/>
</dbReference>
<dbReference type="CDD" id="cd07434">
    <property type="entry name" value="PHP_PolIIIA_DnaE2"/>
    <property type="match status" value="1"/>
</dbReference>
<dbReference type="Gene3D" id="1.10.150.870">
    <property type="match status" value="1"/>
</dbReference>
<dbReference type="Gene3D" id="3.20.20.140">
    <property type="entry name" value="Metal-dependent hydrolases"/>
    <property type="match status" value="1"/>
</dbReference>
<dbReference type="HAMAP" id="MF_01902">
    <property type="entry name" value="DNApol_error_prone"/>
    <property type="match status" value="1"/>
</dbReference>
<dbReference type="InterPro" id="IPR011708">
    <property type="entry name" value="DNA_pol3_alpha_NTPase_dom"/>
</dbReference>
<dbReference type="InterPro" id="IPR040982">
    <property type="entry name" value="DNA_pol3_finger"/>
</dbReference>
<dbReference type="InterPro" id="IPR023073">
    <property type="entry name" value="DnaE2"/>
</dbReference>
<dbReference type="InterPro" id="IPR004805">
    <property type="entry name" value="DnaE2/DnaE/PolC"/>
</dbReference>
<dbReference type="InterPro" id="IPR029460">
    <property type="entry name" value="DNAPol_HHH"/>
</dbReference>
<dbReference type="InterPro" id="IPR004365">
    <property type="entry name" value="NA-bd_OB_tRNA"/>
</dbReference>
<dbReference type="InterPro" id="IPR004013">
    <property type="entry name" value="PHP_dom"/>
</dbReference>
<dbReference type="InterPro" id="IPR003141">
    <property type="entry name" value="Pol/His_phosphatase_N"/>
</dbReference>
<dbReference type="InterPro" id="IPR016195">
    <property type="entry name" value="Pol/histidinol_Pase-like"/>
</dbReference>
<dbReference type="NCBIfam" id="TIGR00594">
    <property type="entry name" value="polc"/>
    <property type="match status" value="1"/>
</dbReference>
<dbReference type="NCBIfam" id="NF004225">
    <property type="entry name" value="PRK05672.1"/>
    <property type="match status" value="1"/>
</dbReference>
<dbReference type="PANTHER" id="PTHR32294">
    <property type="entry name" value="DNA POLYMERASE III SUBUNIT ALPHA"/>
    <property type="match status" value="1"/>
</dbReference>
<dbReference type="PANTHER" id="PTHR32294:SF4">
    <property type="entry name" value="ERROR-PRONE DNA POLYMERASE"/>
    <property type="match status" value="1"/>
</dbReference>
<dbReference type="Pfam" id="PF07733">
    <property type="entry name" value="DNA_pol3_alpha"/>
    <property type="match status" value="1"/>
</dbReference>
<dbReference type="Pfam" id="PF17657">
    <property type="entry name" value="DNA_pol3_finger"/>
    <property type="match status" value="1"/>
</dbReference>
<dbReference type="Pfam" id="PF14579">
    <property type="entry name" value="HHH_6"/>
    <property type="match status" value="1"/>
</dbReference>
<dbReference type="Pfam" id="PF02811">
    <property type="entry name" value="PHP"/>
    <property type="match status" value="1"/>
</dbReference>
<dbReference type="Pfam" id="PF01336">
    <property type="entry name" value="tRNA_anti-codon"/>
    <property type="match status" value="1"/>
</dbReference>
<dbReference type="SMART" id="SM00481">
    <property type="entry name" value="POLIIIAc"/>
    <property type="match status" value="1"/>
</dbReference>
<dbReference type="SUPFAM" id="SSF89550">
    <property type="entry name" value="PHP domain-like"/>
    <property type="match status" value="1"/>
</dbReference>